<sequence>MGRIKTKITILLVLLLLLAGGYMYINDIELKDVPTAIGQTLSSEEEEYTIQEYKVTKIDGSEYHGVAENGTKIIFNGKKLNQDLSDIKEGDKIKAYFSKSKRIDGLIKVAKVND</sequence>
<gene>
    <name type="primary">ypuD</name>
    <name type="ordered locus">BSU23300</name>
</gene>
<dbReference type="EMBL" id="L09228">
    <property type="protein sequence ID" value="AAA67479.1"/>
    <property type="molecule type" value="Genomic_DNA"/>
</dbReference>
<dbReference type="EMBL" id="X51510">
    <property type="protein sequence ID" value="CAA35877.1"/>
    <property type="molecule type" value="Genomic_DNA"/>
</dbReference>
<dbReference type="EMBL" id="AL009126">
    <property type="protein sequence ID" value="CAB14262.1"/>
    <property type="molecule type" value="Genomic_DNA"/>
</dbReference>
<dbReference type="PIR" id="S45541">
    <property type="entry name" value="S45541"/>
</dbReference>
<dbReference type="RefSeq" id="NP_390211.1">
    <property type="nucleotide sequence ID" value="NC_000964.3"/>
</dbReference>
<dbReference type="RefSeq" id="WP_004398735.1">
    <property type="nucleotide sequence ID" value="NZ_OZ025638.1"/>
</dbReference>
<dbReference type="SMR" id="P17616"/>
<dbReference type="FunCoup" id="P17616">
    <property type="interactions" value="5"/>
</dbReference>
<dbReference type="STRING" id="224308.BSU23300"/>
<dbReference type="PaxDb" id="224308-BSU23300"/>
<dbReference type="DNASU" id="938943"/>
<dbReference type="EnsemblBacteria" id="CAB14262">
    <property type="protein sequence ID" value="CAB14262"/>
    <property type="gene ID" value="BSU_23300"/>
</dbReference>
<dbReference type="GeneID" id="938943"/>
<dbReference type="KEGG" id="bsu:BSU23300"/>
<dbReference type="PATRIC" id="fig|224308.179.peg.2536"/>
<dbReference type="eggNOG" id="ENOG5030D34">
    <property type="taxonomic scope" value="Bacteria"/>
</dbReference>
<dbReference type="InParanoid" id="P17616"/>
<dbReference type="OrthoDB" id="2865757at2"/>
<dbReference type="BioCyc" id="BSUB:BSU23300-MONOMER"/>
<dbReference type="Proteomes" id="UP000001570">
    <property type="component" value="Chromosome"/>
</dbReference>
<name>YPUD_BACSU</name>
<organism>
    <name type="scientific">Bacillus subtilis (strain 168)</name>
    <dbReference type="NCBI Taxonomy" id="224308"/>
    <lineage>
        <taxon>Bacteria</taxon>
        <taxon>Bacillati</taxon>
        <taxon>Bacillota</taxon>
        <taxon>Bacilli</taxon>
        <taxon>Bacillales</taxon>
        <taxon>Bacillaceae</taxon>
        <taxon>Bacillus</taxon>
    </lineage>
</organism>
<keyword id="KW-1185">Reference proteome</keyword>
<reference key="1">
    <citation type="journal article" date="1993" name="Mol. Microbiol.">
        <title>The organization of the Bacillus subtilis 168 chromosome region between the spoVA and serA genetic loci, based on sequence data.</title>
        <authorList>
            <person name="Sorokin A.V."/>
            <person name="Zumstein E."/>
            <person name="Azevedo V."/>
            <person name="Ehrlich S.D."/>
            <person name="Serror P."/>
        </authorList>
    </citation>
    <scope>NUCLEOTIDE SEQUENCE [GENOMIC DNA]</scope>
    <source>
        <strain>168 / Marburg / ATCC 6051 / DSM 10 / JCM 1465 / NBRC 13719 / NCIMB 3610 / NRRL NRS-744 / VKM B-501</strain>
    </source>
</reference>
<reference key="2">
    <citation type="thesis" date="1989" institute="USSR Academy of Sciences" country="Russia">
        <authorList>
            <person name="Mironov V.N."/>
        </authorList>
    </citation>
    <scope>NUCLEOTIDE SEQUENCE [GENOMIC DNA]</scope>
    <source>
        <strain>168 / SHGW</strain>
    </source>
</reference>
<reference key="3">
    <citation type="journal article" date="1997" name="Nature">
        <title>The complete genome sequence of the Gram-positive bacterium Bacillus subtilis.</title>
        <authorList>
            <person name="Kunst F."/>
            <person name="Ogasawara N."/>
            <person name="Moszer I."/>
            <person name="Albertini A.M."/>
            <person name="Alloni G."/>
            <person name="Azevedo V."/>
            <person name="Bertero M.G."/>
            <person name="Bessieres P."/>
            <person name="Bolotin A."/>
            <person name="Borchert S."/>
            <person name="Borriss R."/>
            <person name="Boursier L."/>
            <person name="Brans A."/>
            <person name="Braun M."/>
            <person name="Brignell S.C."/>
            <person name="Bron S."/>
            <person name="Brouillet S."/>
            <person name="Bruschi C.V."/>
            <person name="Caldwell B."/>
            <person name="Capuano V."/>
            <person name="Carter N.M."/>
            <person name="Choi S.-K."/>
            <person name="Codani J.-J."/>
            <person name="Connerton I.F."/>
            <person name="Cummings N.J."/>
            <person name="Daniel R.A."/>
            <person name="Denizot F."/>
            <person name="Devine K.M."/>
            <person name="Duesterhoeft A."/>
            <person name="Ehrlich S.D."/>
            <person name="Emmerson P.T."/>
            <person name="Entian K.-D."/>
            <person name="Errington J."/>
            <person name="Fabret C."/>
            <person name="Ferrari E."/>
            <person name="Foulger D."/>
            <person name="Fritz C."/>
            <person name="Fujita M."/>
            <person name="Fujita Y."/>
            <person name="Fuma S."/>
            <person name="Galizzi A."/>
            <person name="Galleron N."/>
            <person name="Ghim S.-Y."/>
            <person name="Glaser P."/>
            <person name="Goffeau A."/>
            <person name="Golightly E.J."/>
            <person name="Grandi G."/>
            <person name="Guiseppi G."/>
            <person name="Guy B.J."/>
            <person name="Haga K."/>
            <person name="Haiech J."/>
            <person name="Harwood C.R."/>
            <person name="Henaut A."/>
            <person name="Hilbert H."/>
            <person name="Holsappel S."/>
            <person name="Hosono S."/>
            <person name="Hullo M.-F."/>
            <person name="Itaya M."/>
            <person name="Jones L.-M."/>
            <person name="Joris B."/>
            <person name="Karamata D."/>
            <person name="Kasahara Y."/>
            <person name="Klaerr-Blanchard M."/>
            <person name="Klein C."/>
            <person name="Kobayashi Y."/>
            <person name="Koetter P."/>
            <person name="Koningstein G."/>
            <person name="Krogh S."/>
            <person name="Kumano M."/>
            <person name="Kurita K."/>
            <person name="Lapidus A."/>
            <person name="Lardinois S."/>
            <person name="Lauber J."/>
            <person name="Lazarevic V."/>
            <person name="Lee S.-M."/>
            <person name="Levine A."/>
            <person name="Liu H."/>
            <person name="Masuda S."/>
            <person name="Mauel C."/>
            <person name="Medigue C."/>
            <person name="Medina N."/>
            <person name="Mellado R.P."/>
            <person name="Mizuno M."/>
            <person name="Moestl D."/>
            <person name="Nakai S."/>
            <person name="Noback M."/>
            <person name="Noone D."/>
            <person name="O'Reilly M."/>
            <person name="Ogawa K."/>
            <person name="Ogiwara A."/>
            <person name="Oudega B."/>
            <person name="Park S.-H."/>
            <person name="Parro V."/>
            <person name="Pohl T.M."/>
            <person name="Portetelle D."/>
            <person name="Porwollik S."/>
            <person name="Prescott A.M."/>
            <person name="Presecan E."/>
            <person name="Pujic P."/>
            <person name="Purnelle B."/>
            <person name="Rapoport G."/>
            <person name="Rey M."/>
            <person name="Reynolds S."/>
            <person name="Rieger M."/>
            <person name="Rivolta C."/>
            <person name="Rocha E."/>
            <person name="Roche B."/>
            <person name="Rose M."/>
            <person name="Sadaie Y."/>
            <person name="Sato T."/>
            <person name="Scanlan E."/>
            <person name="Schleich S."/>
            <person name="Schroeter R."/>
            <person name="Scoffone F."/>
            <person name="Sekiguchi J."/>
            <person name="Sekowska A."/>
            <person name="Seror S.J."/>
            <person name="Serror P."/>
            <person name="Shin B.-S."/>
            <person name="Soldo B."/>
            <person name="Sorokin A."/>
            <person name="Tacconi E."/>
            <person name="Takagi T."/>
            <person name="Takahashi H."/>
            <person name="Takemaru K."/>
            <person name="Takeuchi M."/>
            <person name="Tamakoshi A."/>
            <person name="Tanaka T."/>
            <person name="Terpstra P."/>
            <person name="Tognoni A."/>
            <person name="Tosato V."/>
            <person name="Uchiyama S."/>
            <person name="Vandenbol M."/>
            <person name="Vannier F."/>
            <person name="Vassarotti A."/>
            <person name="Viari A."/>
            <person name="Wambutt R."/>
            <person name="Wedler E."/>
            <person name="Wedler H."/>
            <person name="Weitzenegger T."/>
            <person name="Winters P."/>
            <person name="Wipat A."/>
            <person name="Yamamoto H."/>
            <person name="Yamane K."/>
            <person name="Yasumoto K."/>
            <person name="Yata K."/>
            <person name="Yoshida K."/>
            <person name="Yoshikawa H.-F."/>
            <person name="Zumstein E."/>
            <person name="Yoshikawa H."/>
            <person name="Danchin A."/>
        </authorList>
    </citation>
    <scope>NUCLEOTIDE SEQUENCE [LARGE SCALE GENOMIC DNA]</scope>
    <source>
        <strain>168</strain>
    </source>
</reference>
<feature type="chain" id="PRO_0000049729" description="Uncharacterized protein YpuD">
    <location>
        <begin position="1"/>
        <end position="114"/>
    </location>
</feature>
<proteinExistence type="predicted"/>
<accession>P17616</accession>
<protein>
    <recommendedName>
        <fullName>Uncharacterized protein YpuD</fullName>
    </recommendedName>
    <alternativeName>
        <fullName>ORFX4</fullName>
    </alternativeName>
</protein>